<comment type="function">
    <text evidence="1">Protects cells and enzymes from oxidative damage, by catalyzing the reduction of hydrogen peroxide, lipid peroxides and organic hydroperoxide, by glutathione.</text>
</comment>
<comment type="catalytic activity">
    <reaction evidence="2">
        <text>a hydroperoxy polyunsaturated fatty acid + 2 glutathione = a hydroxy polyunsaturated fatty acid + glutathione disulfide + H2O</text>
        <dbReference type="Rhea" id="RHEA:19057"/>
        <dbReference type="ChEBI" id="CHEBI:15377"/>
        <dbReference type="ChEBI" id="CHEBI:57925"/>
        <dbReference type="ChEBI" id="CHEBI:58297"/>
        <dbReference type="ChEBI" id="CHEBI:131871"/>
        <dbReference type="ChEBI" id="CHEBI:134019"/>
        <dbReference type="EC" id="1.11.1.12"/>
    </reaction>
</comment>
<comment type="subcellular location">
    <subcellularLocation>
        <location evidence="3">Cytoplasm</location>
    </subcellularLocation>
</comment>
<comment type="tissue specificity">
    <text>Germinating seed, apex, flower, as well as in stressed tissues.</text>
</comment>
<comment type="similarity">
    <text evidence="3">Belongs to the glutathione peroxidase family.</text>
</comment>
<keyword id="KW-0963">Cytoplasm</keyword>
<keyword id="KW-0560">Oxidoreductase</keyword>
<keyword id="KW-0575">Peroxidase</keyword>
<keyword id="KW-1185">Reference proteome</keyword>
<accession>P30708</accession>
<dbReference type="EC" id="1.11.1.12"/>
<dbReference type="EMBL" id="X60219">
    <property type="protein sequence ID" value="CAA42780.1"/>
    <property type="molecule type" value="mRNA"/>
</dbReference>
<dbReference type="PIR" id="S20501">
    <property type="entry name" value="S20501"/>
</dbReference>
<dbReference type="SMR" id="P30708"/>
<dbReference type="STRING" id="4096.P30708"/>
<dbReference type="PeroxiBase" id="2868">
    <property type="entry name" value="NsGPx06"/>
</dbReference>
<dbReference type="eggNOG" id="KOG1651">
    <property type="taxonomic scope" value="Eukaryota"/>
</dbReference>
<dbReference type="Proteomes" id="UP000189701">
    <property type="component" value="Unplaced"/>
</dbReference>
<dbReference type="GO" id="GO:0005829">
    <property type="term" value="C:cytosol"/>
    <property type="evidence" value="ECO:0007669"/>
    <property type="project" value="TreeGrafter"/>
</dbReference>
<dbReference type="GO" id="GO:0047066">
    <property type="term" value="F:phospholipid-hydroperoxide glutathione peroxidase activity"/>
    <property type="evidence" value="ECO:0007669"/>
    <property type="project" value="UniProtKB-EC"/>
</dbReference>
<dbReference type="GO" id="GO:0006979">
    <property type="term" value="P:response to oxidative stress"/>
    <property type="evidence" value="ECO:0007669"/>
    <property type="project" value="InterPro"/>
</dbReference>
<dbReference type="CDD" id="cd00340">
    <property type="entry name" value="GSH_Peroxidase"/>
    <property type="match status" value="1"/>
</dbReference>
<dbReference type="FunFam" id="3.40.30.10:FF:000025">
    <property type="entry name" value="Glutathione peroxidase"/>
    <property type="match status" value="1"/>
</dbReference>
<dbReference type="Gene3D" id="3.40.30.10">
    <property type="entry name" value="Glutaredoxin"/>
    <property type="match status" value="1"/>
</dbReference>
<dbReference type="InterPro" id="IPR000889">
    <property type="entry name" value="Glutathione_peroxidase"/>
</dbReference>
<dbReference type="InterPro" id="IPR029759">
    <property type="entry name" value="GPX_AS"/>
</dbReference>
<dbReference type="InterPro" id="IPR029760">
    <property type="entry name" value="GPX_CS"/>
</dbReference>
<dbReference type="InterPro" id="IPR036249">
    <property type="entry name" value="Thioredoxin-like_sf"/>
</dbReference>
<dbReference type="InterPro" id="IPR013766">
    <property type="entry name" value="Thioredoxin_domain"/>
</dbReference>
<dbReference type="PANTHER" id="PTHR11592">
    <property type="entry name" value="GLUTATHIONE PEROXIDASE"/>
    <property type="match status" value="1"/>
</dbReference>
<dbReference type="PANTHER" id="PTHR11592:SF92">
    <property type="entry name" value="PHOSPHOLIPID HYDROPEROXIDE GLUTATHIONE PEROXIDASE-RELATED"/>
    <property type="match status" value="1"/>
</dbReference>
<dbReference type="Pfam" id="PF00255">
    <property type="entry name" value="GSHPx"/>
    <property type="match status" value="1"/>
</dbReference>
<dbReference type="PIRSF" id="PIRSF000303">
    <property type="entry name" value="Glutathion_perox"/>
    <property type="match status" value="1"/>
</dbReference>
<dbReference type="PRINTS" id="PR01011">
    <property type="entry name" value="GLUTPROXDASE"/>
</dbReference>
<dbReference type="SUPFAM" id="SSF52833">
    <property type="entry name" value="Thioredoxin-like"/>
    <property type="match status" value="1"/>
</dbReference>
<dbReference type="PROSITE" id="PS00460">
    <property type="entry name" value="GLUTATHIONE_PEROXID_1"/>
    <property type="match status" value="1"/>
</dbReference>
<dbReference type="PROSITE" id="PS00763">
    <property type="entry name" value="GLUTATHIONE_PEROXID_2"/>
    <property type="match status" value="1"/>
</dbReference>
<dbReference type="PROSITE" id="PS51355">
    <property type="entry name" value="GLUTATHIONE_PEROXID_3"/>
    <property type="match status" value="1"/>
</dbReference>
<name>GPX4_NICSY</name>
<reference key="1">
    <citation type="journal article" date="1992" name="Plant Mol. Biol.">
        <title>Isolation and characterization of a plant cDNA showing homology to animal glutathione peroxidases.</title>
        <authorList>
            <person name="Criqui M.-C."/>
            <person name="Jamet E."/>
            <person name="Parmentier Y."/>
            <person name="Marbach J."/>
            <person name="Durr A."/>
            <person name="Fleck J."/>
        </authorList>
    </citation>
    <scope>NUCLEOTIDE SEQUENCE [MRNA]</scope>
    <source>
        <tissue>Protoplast</tissue>
    </source>
</reference>
<organism>
    <name type="scientific">Nicotiana sylvestris</name>
    <name type="common">Wood tobacco</name>
    <name type="synonym">South American tobacco</name>
    <dbReference type="NCBI Taxonomy" id="4096"/>
    <lineage>
        <taxon>Eukaryota</taxon>
        <taxon>Viridiplantae</taxon>
        <taxon>Streptophyta</taxon>
        <taxon>Embryophyta</taxon>
        <taxon>Tracheophyta</taxon>
        <taxon>Spermatophyta</taxon>
        <taxon>Magnoliopsida</taxon>
        <taxon>eudicotyledons</taxon>
        <taxon>Gunneridae</taxon>
        <taxon>Pentapetalae</taxon>
        <taxon>asterids</taxon>
        <taxon>lamiids</taxon>
        <taxon>Solanales</taxon>
        <taxon>Solanaceae</taxon>
        <taxon>Nicotianoideae</taxon>
        <taxon>Nicotianeae</taxon>
        <taxon>Nicotiana</taxon>
    </lineage>
</organism>
<proteinExistence type="evidence at transcript level"/>
<evidence type="ECO:0000250" key="1">
    <source>
        <dbReference type="UniProtKB" id="O70325"/>
    </source>
</evidence>
<evidence type="ECO:0000250" key="2">
    <source>
        <dbReference type="UniProtKB" id="P36968"/>
    </source>
</evidence>
<evidence type="ECO:0000305" key="3"/>
<protein>
    <recommendedName>
        <fullName>Probable phospholipid hydroperoxide glutathione peroxidase</fullName>
        <shortName>PHGPx</shortName>
        <ecNumber>1.11.1.12</ecNumber>
    </recommendedName>
    <alternativeName>
        <fullName>6P229</fullName>
    </alternativeName>
</protein>
<sequence>MASQSSKPQSIYDFTVKDAKGNDVDLSIYKGKVLIIVNVASQCGLTNSNYTDLTEIYKKYKDQGLEILAFPCNQFGGQEPGSIEEIQNMVCTRFKAEYPIFDKVDVNGDNAAPLYKFLKSSKGGFFGDSIKWNFSKFLVDKEGNVVDRYSPTTTPASMEKDIKKLLGVA</sequence>
<feature type="chain" id="PRO_0000066633" description="Probable phospholipid hydroperoxide glutathione peroxidase">
    <location>
        <begin position="1"/>
        <end position="169"/>
    </location>
</feature>
<feature type="active site" evidence="2">
    <location>
        <position position="43"/>
    </location>
</feature>